<accession>Q2LWU2</accession>
<feature type="chain" id="PRO_0000255545" description="Small ribosomal subunit protein uS15">
    <location>
        <begin position="1"/>
        <end position="88"/>
    </location>
</feature>
<proteinExistence type="inferred from homology"/>
<sequence>MLSSDQRGSIIENYQLHEKDTGSPEVQIALLSARIEYLTDHFKVHKKDHHSRRGLLKLVGQRRRLLDYLKNKNIERYRQVIQRLGLRK</sequence>
<evidence type="ECO:0000255" key="1">
    <source>
        <dbReference type="HAMAP-Rule" id="MF_01343"/>
    </source>
</evidence>
<evidence type="ECO:0000305" key="2"/>
<reference key="1">
    <citation type="journal article" date="2007" name="Proc. Natl. Acad. Sci. U.S.A.">
        <title>The genome of Syntrophus aciditrophicus: life at the thermodynamic limit of microbial growth.</title>
        <authorList>
            <person name="McInerney M.J."/>
            <person name="Rohlin L."/>
            <person name="Mouttaki H."/>
            <person name="Kim U."/>
            <person name="Krupp R.S."/>
            <person name="Rios-Hernandez L."/>
            <person name="Sieber J."/>
            <person name="Struchtemeyer C.G."/>
            <person name="Bhattacharyya A."/>
            <person name="Campbell J.W."/>
            <person name="Gunsalus R.P."/>
        </authorList>
    </citation>
    <scope>NUCLEOTIDE SEQUENCE [LARGE SCALE GENOMIC DNA]</scope>
    <source>
        <strain>SB</strain>
    </source>
</reference>
<keyword id="KW-1185">Reference proteome</keyword>
<keyword id="KW-0687">Ribonucleoprotein</keyword>
<keyword id="KW-0689">Ribosomal protein</keyword>
<keyword id="KW-0694">RNA-binding</keyword>
<keyword id="KW-0699">rRNA-binding</keyword>
<gene>
    <name evidence="1" type="primary">rpsO</name>
    <name type="ordered locus">SYNAS_26710</name>
    <name type="ORF">SYN_01782</name>
</gene>
<name>RS15_SYNAS</name>
<organism>
    <name type="scientific">Syntrophus aciditrophicus (strain SB)</name>
    <dbReference type="NCBI Taxonomy" id="56780"/>
    <lineage>
        <taxon>Bacteria</taxon>
        <taxon>Pseudomonadati</taxon>
        <taxon>Thermodesulfobacteriota</taxon>
        <taxon>Syntrophia</taxon>
        <taxon>Syntrophales</taxon>
        <taxon>Syntrophaceae</taxon>
        <taxon>Syntrophus</taxon>
    </lineage>
</organism>
<dbReference type="EMBL" id="CP000252">
    <property type="protein sequence ID" value="ABC78550.1"/>
    <property type="molecule type" value="Genomic_DNA"/>
</dbReference>
<dbReference type="RefSeq" id="WP_011418569.1">
    <property type="nucleotide sequence ID" value="NC_007759.1"/>
</dbReference>
<dbReference type="SMR" id="Q2LWU2"/>
<dbReference type="FunCoup" id="Q2LWU2">
    <property type="interactions" value="459"/>
</dbReference>
<dbReference type="STRING" id="56780.SYN_01782"/>
<dbReference type="KEGG" id="sat:SYN_01782"/>
<dbReference type="eggNOG" id="COG0184">
    <property type="taxonomic scope" value="Bacteria"/>
</dbReference>
<dbReference type="HOGENOM" id="CLU_148518_0_0_7"/>
<dbReference type="InParanoid" id="Q2LWU2"/>
<dbReference type="Proteomes" id="UP000001933">
    <property type="component" value="Chromosome"/>
</dbReference>
<dbReference type="GO" id="GO:0022627">
    <property type="term" value="C:cytosolic small ribosomal subunit"/>
    <property type="evidence" value="ECO:0007669"/>
    <property type="project" value="TreeGrafter"/>
</dbReference>
<dbReference type="GO" id="GO:0019843">
    <property type="term" value="F:rRNA binding"/>
    <property type="evidence" value="ECO:0007669"/>
    <property type="project" value="UniProtKB-UniRule"/>
</dbReference>
<dbReference type="GO" id="GO:0003735">
    <property type="term" value="F:structural constituent of ribosome"/>
    <property type="evidence" value="ECO:0007669"/>
    <property type="project" value="InterPro"/>
</dbReference>
<dbReference type="GO" id="GO:0006412">
    <property type="term" value="P:translation"/>
    <property type="evidence" value="ECO:0007669"/>
    <property type="project" value="UniProtKB-UniRule"/>
</dbReference>
<dbReference type="CDD" id="cd00353">
    <property type="entry name" value="Ribosomal_S15p_S13e"/>
    <property type="match status" value="1"/>
</dbReference>
<dbReference type="FunFam" id="1.10.287.10:FF:000002">
    <property type="entry name" value="30S ribosomal protein S15"/>
    <property type="match status" value="1"/>
</dbReference>
<dbReference type="Gene3D" id="6.10.250.3130">
    <property type="match status" value="1"/>
</dbReference>
<dbReference type="Gene3D" id="1.10.287.10">
    <property type="entry name" value="S15/NS1, RNA-binding"/>
    <property type="match status" value="1"/>
</dbReference>
<dbReference type="HAMAP" id="MF_01343_B">
    <property type="entry name" value="Ribosomal_uS15_B"/>
    <property type="match status" value="1"/>
</dbReference>
<dbReference type="InterPro" id="IPR000589">
    <property type="entry name" value="Ribosomal_uS15"/>
</dbReference>
<dbReference type="InterPro" id="IPR005290">
    <property type="entry name" value="Ribosomal_uS15_bac-type"/>
</dbReference>
<dbReference type="InterPro" id="IPR009068">
    <property type="entry name" value="uS15_NS1_RNA-bd_sf"/>
</dbReference>
<dbReference type="NCBIfam" id="TIGR00952">
    <property type="entry name" value="S15_bact"/>
    <property type="match status" value="1"/>
</dbReference>
<dbReference type="PANTHER" id="PTHR23321">
    <property type="entry name" value="RIBOSOMAL PROTEIN S15, BACTERIAL AND ORGANELLAR"/>
    <property type="match status" value="1"/>
</dbReference>
<dbReference type="PANTHER" id="PTHR23321:SF26">
    <property type="entry name" value="SMALL RIBOSOMAL SUBUNIT PROTEIN US15M"/>
    <property type="match status" value="1"/>
</dbReference>
<dbReference type="Pfam" id="PF00312">
    <property type="entry name" value="Ribosomal_S15"/>
    <property type="match status" value="1"/>
</dbReference>
<dbReference type="SMART" id="SM01387">
    <property type="entry name" value="Ribosomal_S15"/>
    <property type="match status" value="1"/>
</dbReference>
<dbReference type="SUPFAM" id="SSF47060">
    <property type="entry name" value="S15/NS1 RNA-binding domain"/>
    <property type="match status" value="1"/>
</dbReference>
<dbReference type="PROSITE" id="PS00362">
    <property type="entry name" value="RIBOSOMAL_S15"/>
    <property type="match status" value="1"/>
</dbReference>
<protein>
    <recommendedName>
        <fullName evidence="1">Small ribosomal subunit protein uS15</fullName>
    </recommendedName>
    <alternativeName>
        <fullName evidence="2">30S ribosomal protein S15</fullName>
    </alternativeName>
</protein>
<comment type="function">
    <text evidence="1">One of the primary rRNA binding proteins, it binds directly to 16S rRNA where it helps nucleate assembly of the platform of the 30S subunit by binding and bridging several RNA helices of the 16S rRNA.</text>
</comment>
<comment type="function">
    <text evidence="1">Forms an intersubunit bridge (bridge B4) with the 23S rRNA of the 50S subunit in the ribosome.</text>
</comment>
<comment type="subunit">
    <text evidence="1">Part of the 30S ribosomal subunit. Forms a bridge to the 50S subunit in the 70S ribosome, contacting the 23S rRNA.</text>
</comment>
<comment type="similarity">
    <text evidence="1">Belongs to the universal ribosomal protein uS15 family.</text>
</comment>